<protein>
    <recommendedName>
        <fullName evidence="1">DNA-directed RNA polymerase subunit epsilon</fullName>
        <shortName evidence="1">RNAP epsilon subunit</shortName>
        <ecNumber evidence="1">2.7.7.6</ecNumber>
    </recommendedName>
    <alternativeName>
        <fullName evidence="1">RNA polymerase epsilon subunit</fullName>
    </alternativeName>
    <alternativeName>
        <fullName evidence="1">Transcriptase subunit epsilon</fullName>
    </alternativeName>
</protein>
<keyword id="KW-0240">DNA-directed RNA polymerase</keyword>
<keyword id="KW-0548">Nucleotidyltransferase</keyword>
<keyword id="KW-1185">Reference proteome</keyword>
<keyword id="KW-0804">Transcription</keyword>
<keyword id="KW-0808">Transferase</keyword>
<name>RPOY_STRMU</name>
<gene>
    <name evidence="1" type="primary">rpoY</name>
    <name type="ordered locus">SMU_369c</name>
</gene>
<dbReference type="EC" id="2.7.7.6" evidence="1"/>
<dbReference type="EMBL" id="AE014133">
    <property type="protein sequence ID" value="AAN58127.1"/>
    <property type="molecule type" value="Genomic_DNA"/>
</dbReference>
<dbReference type="RefSeq" id="NP_720821.1">
    <property type="nucleotide sequence ID" value="NC_004350.2"/>
</dbReference>
<dbReference type="RefSeq" id="WP_002268030.1">
    <property type="nucleotide sequence ID" value="NC_004350.2"/>
</dbReference>
<dbReference type="SMR" id="Q8DVU6"/>
<dbReference type="STRING" id="210007.SMU_369c"/>
<dbReference type="KEGG" id="smu:SMU_369c"/>
<dbReference type="PATRIC" id="fig|210007.7.peg.323"/>
<dbReference type="eggNOG" id="COG5503">
    <property type="taxonomic scope" value="Bacteria"/>
</dbReference>
<dbReference type="HOGENOM" id="CLU_187518_0_0_9"/>
<dbReference type="OrthoDB" id="2147503at2"/>
<dbReference type="PhylomeDB" id="Q8DVU6"/>
<dbReference type="Proteomes" id="UP000002512">
    <property type="component" value="Chromosome"/>
</dbReference>
<dbReference type="GO" id="GO:0000428">
    <property type="term" value="C:DNA-directed RNA polymerase complex"/>
    <property type="evidence" value="ECO:0007669"/>
    <property type="project" value="UniProtKB-KW"/>
</dbReference>
<dbReference type="GO" id="GO:0003677">
    <property type="term" value="F:DNA binding"/>
    <property type="evidence" value="ECO:0007669"/>
    <property type="project" value="UniProtKB-UniRule"/>
</dbReference>
<dbReference type="GO" id="GO:0003899">
    <property type="term" value="F:DNA-directed RNA polymerase activity"/>
    <property type="evidence" value="ECO:0007669"/>
    <property type="project" value="UniProtKB-UniRule"/>
</dbReference>
<dbReference type="GO" id="GO:0006351">
    <property type="term" value="P:DNA-templated transcription"/>
    <property type="evidence" value="ECO:0007669"/>
    <property type="project" value="UniProtKB-UniRule"/>
</dbReference>
<dbReference type="Gene3D" id="3.10.20.730">
    <property type="entry name" value="RNAP, epsilon subunit-like"/>
    <property type="match status" value="1"/>
</dbReference>
<dbReference type="HAMAP" id="MF_01553">
    <property type="entry name" value="RNApol_bact_RpoY"/>
    <property type="match status" value="1"/>
</dbReference>
<dbReference type="InterPro" id="IPR009907">
    <property type="entry name" value="RpoY"/>
</dbReference>
<dbReference type="NCBIfam" id="NF010188">
    <property type="entry name" value="PRK13667.1"/>
    <property type="match status" value="1"/>
</dbReference>
<dbReference type="Pfam" id="PF07288">
    <property type="entry name" value="RpoY"/>
    <property type="match status" value="1"/>
</dbReference>
<sequence length="76" mass="9075">MIYKVFYQETKDSSPRREQTKTLYLDIDAQTELDGRIQARQLVEEKIAYNIELIELLSDKHLEYEKETGAFQLTEF</sequence>
<evidence type="ECO:0000255" key="1">
    <source>
        <dbReference type="HAMAP-Rule" id="MF_01553"/>
    </source>
</evidence>
<feature type="chain" id="PRO_0000163146" description="DNA-directed RNA polymerase subunit epsilon">
    <location>
        <begin position="1"/>
        <end position="76"/>
    </location>
</feature>
<organism>
    <name type="scientific">Streptococcus mutans serotype c (strain ATCC 700610 / UA159)</name>
    <dbReference type="NCBI Taxonomy" id="210007"/>
    <lineage>
        <taxon>Bacteria</taxon>
        <taxon>Bacillati</taxon>
        <taxon>Bacillota</taxon>
        <taxon>Bacilli</taxon>
        <taxon>Lactobacillales</taxon>
        <taxon>Streptococcaceae</taxon>
        <taxon>Streptococcus</taxon>
    </lineage>
</organism>
<comment type="function">
    <text evidence="1">A non-essential component of RNA polymerase (RNAP).</text>
</comment>
<comment type="catalytic activity">
    <reaction evidence="1">
        <text>RNA(n) + a ribonucleoside 5'-triphosphate = RNA(n+1) + diphosphate</text>
        <dbReference type="Rhea" id="RHEA:21248"/>
        <dbReference type="Rhea" id="RHEA-COMP:14527"/>
        <dbReference type="Rhea" id="RHEA-COMP:17342"/>
        <dbReference type="ChEBI" id="CHEBI:33019"/>
        <dbReference type="ChEBI" id="CHEBI:61557"/>
        <dbReference type="ChEBI" id="CHEBI:140395"/>
        <dbReference type="EC" id="2.7.7.6"/>
    </reaction>
</comment>
<comment type="subunit">
    <text evidence="1">RNAP is composed of a core of 2 alpha, a beta and a beta' subunit. The core is associated with a delta subunit, and at least one of epsilon or omega. When a sigma factor is associated with the core the holoenzyme is formed, which can initiate transcription.</text>
</comment>
<comment type="similarity">
    <text evidence="1">Belongs to the RNA polymerase subunit epsilon family.</text>
</comment>
<accession>Q8DVU6</accession>
<reference key="1">
    <citation type="journal article" date="2002" name="Proc. Natl. Acad. Sci. U.S.A.">
        <title>Genome sequence of Streptococcus mutans UA159, a cariogenic dental pathogen.</title>
        <authorList>
            <person name="Ajdic D.J."/>
            <person name="McShan W.M."/>
            <person name="McLaughlin R.E."/>
            <person name="Savic G."/>
            <person name="Chang J."/>
            <person name="Carson M.B."/>
            <person name="Primeaux C."/>
            <person name="Tian R."/>
            <person name="Kenton S."/>
            <person name="Jia H.G."/>
            <person name="Lin S.P."/>
            <person name="Qian Y."/>
            <person name="Li S."/>
            <person name="Zhu H."/>
            <person name="Najar F.Z."/>
            <person name="Lai H."/>
            <person name="White J."/>
            <person name="Roe B.A."/>
            <person name="Ferretti J.J."/>
        </authorList>
    </citation>
    <scope>NUCLEOTIDE SEQUENCE [LARGE SCALE GENOMIC DNA]</scope>
    <source>
        <strain>ATCC 700610 / UA159</strain>
    </source>
</reference>
<proteinExistence type="inferred from homology"/>